<accession>Q8CWF6</accession>
<gene>
    <name evidence="1" type="primary">ribB</name>
    <name type="ordered locus">OB3214</name>
</gene>
<reference key="1">
    <citation type="journal article" date="2002" name="Nucleic Acids Res.">
        <title>Genome sequence of Oceanobacillus iheyensis isolated from the Iheya Ridge and its unexpected adaptive capabilities to extreme environments.</title>
        <authorList>
            <person name="Takami H."/>
            <person name="Takaki Y."/>
            <person name="Uchiyama I."/>
        </authorList>
    </citation>
    <scope>NUCLEOTIDE SEQUENCE [LARGE SCALE GENOMIC DNA]</scope>
    <source>
        <strain>DSM 14371 / CIP 107618 / JCM 11309 / KCTC 3954 / HTE831</strain>
    </source>
</reference>
<dbReference type="EC" id="4.1.99.12" evidence="1"/>
<dbReference type="EMBL" id="BA000028">
    <property type="protein sequence ID" value="BAC15170.1"/>
    <property type="molecule type" value="Genomic_DNA"/>
</dbReference>
<dbReference type="RefSeq" id="WP_011067610.1">
    <property type="nucleotide sequence ID" value="NC_004193.1"/>
</dbReference>
<dbReference type="SMR" id="Q8CWF6"/>
<dbReference type="STRING" id="221109.gene:10735466"/>
<dbReference type="KEGG" id="oih:OB3214"/>
<dbReference type="eggNOG" id="COG0108">
    <property type="taxonomic scope" value="Bacteria"/>
</dbReference>
<dbReference type="HOGENOM" id="CLU_020273_3_0_9"/>
<dbReference type="OrthoDB" id="9793111at2"/>
<dbReference type="PhylomeDB" id="Q8CWF6"/>
<dbReference type="UniPathway" id="UPA00275">
    <property type="reaction ID" value="UER00399"/>
</dbReference>
<dbReference type="Proteomes" id="UP000000822">
    <property type="component" value="Chromosome"/>
</dbReference>
<dbReference type="GO" id="GO:0005829">
    <property type="term" value="C:cytosol"/>
    <property type="evidence" value="ECO:0007669"/>
    <property type="project" value="TreeGrafter"/>
</dbReference>
<dbReference type="GO" id="GO:0008686">
    <property type="term" value="F:3,4-dihydroxy-2-butanone-4-phosphate synthase activity"/>
    <property type="evidence" value="ECO:0007669"/>
    <property type="project" value="UniProtKB-UniRule"/>
</dbReference>
<dbReference type="GO" id="GO:0003935">
    <property type="term" value="F:GTP cyclohydrolase II activity"/>
    <property type="evidence" value="ECO:0007669"/>
    <property type="project" value="TreeGrafter"/>
</dbReference>
<dbReference type="GO" id="GO:0000287">
    <property type="term" value="F:magnesium ion binding"/>
    <property type="evidence" value="ECO:0007669"/>
    <property type="project" value="UniProtKB-UniRule"/>
</dbReference>
<dbReference type="GO" id="GO:0030145">
    <property type="term" value="F:manganese ion binding"/>
    <property type="evidence" value="ECO:0007669"/>
    <property type="project" value="UniProtKB-UniRule"/>
</dbReference>
<dbReference type="GO" id="GO:0009231">
    <property type="term" value="P:riboflavin biosynthetic process"/>
    <property type="evidence" value="ECO:0007669"/>
    <property type="project" value="UniProtKB-UniRule"/>
</dbReference>
<dbReference type="FunFam" id="3.90.870.10:FF:000001">
    <property type="entry name" value="Riboflavin biosynthesis protein RibBA"/>
    <property type="match status" value="1"/>
</dbReference>
<dbReference type="Gene3D" id="3.90.870.10">
    <property type="entry name" value="DHBP synthase"/>
    <property type="match status" value="1"/>
</dbReference>
<dbReference type="HAMAP" id="MF_00180">
    <property type="entry name" value="RibB"/>
    <property type="match status" value="1"/>
</dbReference>
<dbReference type="InterPro" id="IPR017945">
    <property type="entry name" value="DHBP_synth_RibB-like_a/b_dom"/>
</dbReference>
<dbReference type="InterPro" id="IPR000422">
    <property type="entry name" value="DHBP_synthase_RibB"/>
</dbReference>
<dbReference type="NCBIfam" id="TIGR00506">
    <property type="entry name" value="ribB"/>
    <property type="match status" value="1"/>
</dbReference>
<dbReference type="PANTHER" id="PTHR21327:SF18">
    <property type="entry name" value="3,4-DIHYDROXY-2-BUTANONE 4-PHOSPHATE SYNTHASE"/>
    <property type="match status" value="1"/>
</dbReference>
<dbReference type="PANTHER" id="PTHR21327">
    <property type="entry name" value="GTP CYCLOHYDROLASE II-RELATED"/>
    <property type="match status" value="1"/>
</dbReference>
<dbReference type="Pfam" id="PF00926">
    <property type="entry name" value="DHBP_synthase"/>
    <property type="match status" value="1"/>
</dbReference>
<dbReference type="SUPFAM" id="SSF55821">
    <property type="entry name" value="YrdC/RibB"/>
    <property type="match status" value="1"/>
</dbReference>
<evidence type="ECO:0000255" key="1">
    <source>
        <dbReference type="HAMAP-Rule" id="MF_00180"/>
    </source>
</evidence>
<protein>
    <recommendedName>
        <fullName evidence="1">3,4-dihydroxy-2-butanone 4-phosphate synthase</fullName>
        <shortName evidence="1">DHBP synthase</shortName>
        <ecNumber evidence="1">4.1.99.12</ecNumber>
    </recommendedName>
</protein>
<sequence>MNELSKIEQAIEDLRNGKLIIVADDADREAEGDLVGLSEFVTPEKVNFMTKYGRGLICVPITEERALELDLHAMATNNTDTYGTQFTVSVDYYTNSTGISTADRADTIRALAEPLSKAADFKRPGHMFPLIAKNAGVLERRGHTEAAVDLARLSNSIPSAYICEILNDDGTMARYPALETLAKDWDLTLITVEDLVQYREKEIAIEN</sequence>
<name>RIBB_OCEIH</name>
<proteinExistence type="inferred from homology"/>
<organism>
    <name type="scientific">Oceanobacillus iheyensis (strain DSM 14371 / CIP 107618 / JCM 11309 / KCTC 3954 / HTE831)</name>
    <dbReference type="NCBI Taxonomy" id="221109"/>
    <lineage>
        <taxon>Bacteria</taxon>
        <taxon>Bacillati</taxon>
        <taxon>Bacillota</taxon>
        <taxon>Bacilli</taxon>
        <taxon>Bacillales</taxon>
        <taxon>Bacillaceae</taxon>
        <taxon>Oceanobacillus</taxon>
    </lineage>
</organism>
<feature type="chain" id="PRO_0000151804" description="3,4-dihydroxy-2-butanone 4-phosphate synthase">
    <location>
        <begin position="1"/>
        <end position="207"/>
    </location>
</feature>
<feature type="binding site" evidence="1">
    <location>
        <begin position="28"/>
        <end position="29"/>
    </location>
    <ligand>
        <name>D-ribulose 5-phosphate</name>
        <dbReference type="ChEBI" id="CHEBI:58121"/>
    </ligand>
</feature>
<feature type="binding site" evidence="1">
    <location>
        <position position="29"/>
    </location>
    <ligand>
        <name>Mg(2+)</name>
        <dbReference type="ChEBI" id="CHEBI:18420"/>
        <label>1</label>
    </ligand>
</feature>
<feature type="binding site" evidence="1">
    <location>
        <position position="29"/>
    </location>
    <ligand>
        <name>Mg(2+)</name>
        <dbReference type="ChEBI" id="CHEBI:18420"/>
        <label>2</label>
    </ligand>
</feature>
<feature type="binding site" evidence="1">
    <location>
        <position position="33"/>
    </location>
    <ligand>
        <name>D-ribulose 5-phosphate</name>
        <dbReference type="ChEBI" id="CHEBI:58121"/>
    </ligand>
</feature>
<feature type="binding site" evidence="1">
    <location>
        <begin position="140"/>
        <end position="144"/>
    </location>
    <ligand>
        <name>D-ribulose 5-phosphate</name>
        <dbReference type="ChEBI" id="CHEBI:58121"/>
    </ligand>
</feature>
<feature type="binding site" evidence="1">
    <location>
        <position position="143"/>
    </location>
    <ligand>
        <name>Mg(2+)</name>
        <dbReference type="ChEBI" id="CHEBI:18420"/>
        <label>2</label>
    </ligand>
</feature>
<feature type="binding site" evidence="1">
    <location>
        <position position="164"/>
    </location>
    <ligand>
        <name>D-ribulose 5-phosphate</name>
        <dbReference type="ChEBI" id="CHEBI:58121"/>
    </ligand>
</feature>
<feature type="site" description="Essential for catalytic activity" evidence="1">
    <location>
        <position position="126"/>
    </location>
</feature>
<feature type="site" description="Essential for catalytic activity" evidence="1">
    <location>
        <position position="164"/>
    </location>
</feature>
<keyword id="KW-0456">Lyase</keyword>
<keyword id="KW-0460">Magnesium</keyword>
<keyword id="KW-0464">Manganese</keyword>
<keyword id="KW-0479">Metal-binding</keyword>
<keyword id="KW-1185">Reference proteome</keyword>
<keyword id="KW-0686">Riboflavin biosynthesis</keyword>
<comment type="function">
    <text evidence="1">Catalyzes the conversion of D-ribulose 5-phosphate to formate and 3,4-dihydroxy-2-butanone 4-phosphate.</text>
</comment>
<comment type="catalytic activity">
    <reaction evidence="1">
        <text>D-ribulose 5-phosphate = (2S)-2-hydroxy-3-oxobutyl phosphate + formate + H(+)</text>
        <dbReference type="Rhea" id="RHEA:18457"/>
        <dbReference type="ChEBI" id="CHEBI:15378"/>
        <dbReference type="ChEBI" id="CHEBI:15740"/>
        <dbReference type="ChEBI" id="CHEBI:58121"/>
        <dbReference type="ChEBI" id="CHEBI:58830"/>
        <dbReference type="EC" id="4.1.99.12"/>
    </reaction>
</comment>
<comment type="cofactor">
    <cofactor evidence="1">
        <name>Mg(2+)</name>
        <dbReference type="ChEBI" id="CHEBI:18420"/>
    </cofactor>
    <cofactor evidence="1">
        <name>Mn(2+)</name>
        <dbReference type="ChEBI" id="CHEBI:29035"/>
    </cofactor>
    <text evidence="1">Binds 2 divalent metal cations per subunit. Magnesium or manganese.</text>
</comment>
<comment type="pathway">
    <text evidence="1">Cofactor biosynthesis; riboflavin biosynthesis; 2-hydroxy-3-oxobutyl phosphate from D-ribulose 5-phosphate: step 1/1.</text>
</comment>
<comment type="subunit">
    <text evidence="1">Homodimer.</text>
</comment>
<comment type="similarity">
    <text evidence="1">Belongs to the DHBP synthase family.</text>
</comment>